<keyword id="KW-0687">Ribonucleoprotein</keyword>
<keyword id="KW-0689">Ribosomal protein</keyword>
<name>RL29_MYCBT</name>
<comment type="similarity">
    <text evidence="1">Belongs to the universal ribosomal protein uL29 family.</text>
</comment>
<proteinExistence type="inferred from homology"/>
<reference key="1">
    <citation type="journal article" date="2009" name="Vaccine">
        <title>Whole genome sequence analysis of Mycobacterium bovis bacillus Calmette-Guerin (BCG) Tokyo 172: a comparative study of BCG vaccine substrains.</title>
        <authorList>
            <person name="Seki M."/>
            <person name="Honda I."/>
            <person name="Fujita I."/>
            <person name="Yano I."/>
            <person name="Yamamoto S."/>
            <person name="Koyama A."/>
        </authorList>
    </citation>
    <scope>NUCLEOTIDE SEQUENCE [LARGE SCALE GENOMIC DNA]</scope>
    <source>
        <strain>BCG / Tokyo 172 / ATCC 35737 / TMC 1019</strain>
    </source>
</reference>
<feature type="chain" id="PRO_1000194025" description="Large ribosomal subunit protein uL29">
    <location>
        <begin position="1"/>
        <end position="77"/>
    </location>
</feature>
<evidence type="ECO:0000255" key="1">
    <source>
        <dbReference type="HAMAP-Rule" id="MF_00374"/>
    </source>
</evidence>
<evidence type="ECO:0000305" key="2"/>
<organism>
    <name type="scientific">Mycobacterium bovis (strain BCG / Tokyo 172 / ATCC 35737 / TMC 1019)</name>
    <dbReference type="NCBI Taxonomy" id="561275"/>
    <lineage>
        <taxon>Bacteria</taxon>
        <taxon>Bacillati</taxon>
        <taxon>Actinomycetota</taxon>
        <taxon>Actinomycetes</taxon>
        <taxon>Mycobacteriales</taxon>
        <taxon>Mycobacteriaceae</taxon>
        <taxon>Mycobacterium</taxon>
        <taxon>Mycobacterium tuberculosis complex</taxon>
    </lineage>
</organism>
<accession>C1AL43</accession>
<sequence length="77" mass="8859">MAVGVSPGELRELTDEELAERLRESKEELFNLRFQMATGQLNNNRRLRTVRQEIARIYTVLRERELGLATGPDGKES</sequence>
<dbReference type="EMBL" id="AP010918">
    <property type="protein sequence ID" value="BAH25022.1"/>
    <property type="molecule type" value="Genomic_DNA"/>
</dbReference>
<dbReference type="RefSeq" id="WP_003403594.1">
    <property type="nucleotide sequence ID" value="NZ_CP014566.1"/>
</dbReference>
<dbReference type="SMR" id="C1AL43"/>
<dbReference type="GeneID" id="45424674"/>
<dbReference type="KEGG" id="mbt:JTY_0729"/>
<dbReference type="HOGENOM" id="CLU_158491_3_3_11"/>
<dbReference type="GO" id="GO:0022625">
    <property type="term" value="C:cytosolic large ribosomal subunit"/>
    <property type="evidence" value="ECO:0007669"/>
    <property type="project" value="TreeGrafter"/>
</dbReference>
<dbReference type="GO" id="GO:0003735">
    <property type="term" value="F:structural constituent of ribosome"/>
    <property type="evidence" value="ECO:0007669"/>
    <property type="project" value="InterPro"/>
</dbReference>
<dbReference type="GO" id="GO:0006412">
    <property type="term" value="P:translation"/>
    <property type="evidence" value="ECO:0007669"/>
    <property type="project" value="UniProtKB-UniRule"/>
</dbReference>
<dbReference type="CDD" id="cd00427">
    <property type="entry name" value="Ribosomal_L29_HIP"/>
    <property type="match status" value="1"/>
</dbReference>
<dbReference type="FunFam" id="1.10.287.310:FF:000001">
    <property type="entry name" value="50S ribosomal protein L29"/>
    <property type="match status" value="1"/>
</dbReference>
<dbReference type="Gene3D" id="1.10.287.310">
    <property type="match status" value="1"/>
</dbReference>
<dbReference type="HAMAP" id="MF_00374">
    <property type="entry name" value="Ribosomal_uL29"/>
    <property type="match status" value="1"/>
</dbReference>
<dbReference type="InterPro" id="IPR050063">
    <property type="entry name" value="Ribosomal_protein_uL29"/>
</dbReference>
<dbReference type="InterPro" id="IPR001854">
    <property type="entry name" value="Ribosomal_uL29"/>
</dbReference>
<dbReference type="InterPro" id="IPR018254">
    <property type="entry name" value="Ribosomal_uL29_CS"/>
</dbReference>
<dbReference type="InterPro" id="IPR036049">
    <property type="entry name" value="Ribosomal_uL29_sf"/>
</dbReference>
<dbReference type="NCBIfam" id="TIGR00012">
    <property type="entry name" value="L29"/>
    <property type="match status" value="1"/>
</dbReference>
<dbReference type="PANTHER" id="PTHR10916">
    <property type="entry name" value="60S RIBOSOMAL PROTEIN L35/50S RIBOSOMAL PROTEIN L29"/>
    <property type="match status" value="1"/>
</dbReference>
<dbReference type="PANTHER" id="PTHR10916:SF0">
    <property type="entry name" value="LARGE RIBOSOMAL SUBUNIT PROTEIN UL29C"/>
    <property type="match status" value="1"/>
</dbReference>
<dbReference type="Pfam" id="PF00831">
    <property type="entry name" value="Ribosomal_L29"/>
    <property type="match status" value="1"/>
</dbReference>
<dbReference type="SUPFAM" id="SSF46561">
    <property type="entry name" value="Ribosomal protein L29 (L29p)"/>
    <property type="match status" value="1"/>
</dbReference>
<dbReference type="PROSITE" id="PS00579">
    <property type="entry name" value="RIBOSOMAL_L29"/>
    <property type="match status" value="1"/>
</dbReference>
<protein>
    <recommendedName>
        <fullName evidence="1">Large ribosomal subunit protein uL29</fullName>
    </recommendedName>
    <alternativeName>
        <fullName evidence="2">50S ribosomal protein L29</fullName>
    </alternativeName>
</protein>
<gene>
    <name evidence="1" type="primary">rpmC</name>
    <name type="ordered locus">JTY_0729</name>
</gene>